<name>CH10_VESOH</name>
<feature type="chain" id="PRO_1000025399" description="Co-chaperonin GroES">
    <location>
        <begin position="1"/>
        <end position="95"/>
    </location>
</feature>
<accession>A5CWP5</accession>
<reference key="1">
    <citation type="journal article" date="2007" name="Curr. Biol.">
        <title>Reduced genome of the thioautotrophic intracellular symbiont in a deep-sea clam, Calyptogena okutanii.</title>
        <authorList>
            <person name="Kuwahara H."/>
            <person name="Yoshida T."/>
            <person name="Takaki Y."/>
            <person name="Shimamura S."/>
            <person name="Nishi S."/>
            <person name="Harada M."/>
            <person name="Matsuyama K."/>
            <person name="Takishita K."/>
            <person name="Kawato M."/>
            <person name="Uematsu K."/>
            <person name="Fujiwara Y."/>
            <person name="Sato T."/>
            <person name="Kato C."/>
            <person name="Kitagawa M."/>
            <person name="Kato I."/>
            <person name="Maruyama T."/>
        </authorList>
    </citation>
    <scope>NUCLEOTIDE SEQUENCE [LARGE SCALE GENOMIC DNA]</scope>
    <source>
        <strain>HA</strain>
    </source>
</reference>
<keyword id="KW-0143">Chaperone</keyword>
<keyword id="KW-0963">Cytoplasm</keyword>
<keyword id="KW-1185">Reference proteome</keyword>
<protein>
    <recommendedName>
        <fullName evidence="1">Co-chaperonin GroES</fullName>
    </recommendedName>
    <alternativeName>
        <fullName evidence="1">10 kDa chaperonin</fullName>
    </alternativeName>
    <alternativeName>
        <fullName evidence="1">Chaperonin-10</fullName>
        <shortName evidence="1">Cpn10</shortName>
    </alternativeName>
</protein>
<comment type="function">
    <text evidence="1">Together with the chaperonin GroEL, plays an essential role in assisting protein folding. The GroEL-GroES system forms a nano-cage that allows encapsulation of the non-native substrate proteins and provides a physical environment optimized to promote and accelerate protein folding. GroES binds to the apical surface of the GroEL ring, thereby capping the opening of the GroEL channel.</text>
</comment>
<comment type="subunit">
    <text evidence="1">Heptamer of 7 subunits arranged in a ring. Interacts with the chaperonin GroEL.</text>
</comment>
<comment type="subcellular location">
    <subcellularLocation>
        <location evidence="1">Cytoplasm</location>
    </subcellularLocation>
</comment>
<comment type="similarity">
    <text evidence="1">Belongs to the GroES chaperonin family.</text>
</comment>
<proteinExistence type="inferred from homology"/>
<sequence>MNIRPLHDRVVVRRVEEKKTTSSGLIIPDSATEKPSEGVVVAVGNGKKNDNGDTIALDVTIGNKVLFAQYAGTEIKVDGKKLLIMKEGDIVAVIK</sequence>
<gene>
    <name evidence="1" type="primary">groES</name>
    <name evidence="1" type="synonym">groS</name>
    <name type="ordered locus">COSY_0515</name>
</gene>
<dbReference type="EMBL" id="AP009247">
    <property type="protein sequence ID" value="BAF61634.1"/>
    <property type="molecule type" value="Genomic_DNA"/>
</dbReference>
<dbReference type="RefSeq" id="WP_011929904.1">
    <property type="nucleotide sequence ID" value="NC_009465.1"/>
</dbReference>
<dbReference type="SMR" id="A5CWP5"/>
<dbReference type="STRING" id="412965.COSY_0515"/>
<dbReference type="KEGG" id="vok:COSY_0515"/>
<dbReference type="eggNOG" id="COG0234">
    <property type="taxonomic scope" value="Bacteria"/>
</dbReference>
<dbReference type="HOGENOM" id="CLU_132825_2_0_6"/>
<dbReference type="OrthoDB" id="9806791at2"/>
<dbReference type="Proteomes" id="UP000000247">
    <property type="component" value="Chromosome"/>
</dbReference>
<dbReference type="GO" id="GO:0005737">
    <property type="term" value="C:cytoplasm"/>
    <property type="evidence" value="ECO:0007669"/>
    <property type="project" value="UniProtKB-SubCell"/>
</dbReference>
<dbReference type="GO" id="GO:0005524">
    <property type="term" value="F:ATP binding"/>
    <property type="evidence" value="ECO:0007669"/>
    <property type="project" value="InterPro"/>
</dbReference>
<dbReference type="GO" id="GO:0046872">
    <property type="term" value="F:metal ion binding"/>
    <property type="evidence" value="ECO:0007669"/>
    <property type="project" value="TreeGrafter"/>
</dbReference>
<dbReference type="GO" id="GO:0044183">
    <property type="term" value="F:protein folding chaperone"/>
    <property type="evidence" value="ECO:0007669"/>
    <property type="project" value="InterPro"/>
</dbReference>
<dbReference type="GO" id="GO:0051087">
    <property type="term" value="F:protein-folding chaperone binding"/>
    <property type="evidence" value="ECO:0007669"/>
    <property type="project" value="TreeGrafter"/>
</dbReference>
<dbReference type="GO" id="GO:0051082">
    <property type="term" value="F:unfolded protein binding"/>
    <property type="evidence" value="ECO:0007669"/>
    <property type="project" value="TreeGrafter"/>
</dbReference>
<dbReference type="GO" id="GO:0051085">
    <property type="term" value="P:chaperone cofactor-dependent protein refolding"/>
    <property type="evidence" value="ECO:0007669"/>
    <property type="project" value="TreeGrafter"/>
</dbReference>
<dbReference type="CDD" id="cd00320">
    <property type="entry name" value="cpn10"/>
    <property type="match status" value="1"/>
</dbReference>
<dbReference type="FunFam" id="2.30.33.40:FF:000001">
    <property type="entry name" value="10 kDa chaperonin"/>
    <property type="match status" value="1"/>
</dbReference>
<dbReference type="Gene3D" id="2.30.33.40">
    <property type="entry name" value="GroES chaperonin"/>
    <property type="match status" value="1"/>
</dbReference>
<dbReference type="HAMAP" id="MF_00580">
    <property type="entry name" value="CH10"/>
    <property type="match status" value="1"/>
</dbReference>
<dbReference type="InterPro" id="IPR020818">
    <property type="entry name" value="Chaperonin_GroES"/>
</dbReference>
<dbReference type="InterPro" id="IPR037124">
    <property type="entry name" value="Chaperonin_GroES_sf"/>
</dbReference>
<dbReference type="InterPro" id="IPR018369">
    <property type="entry name" value="Chaprnonin_Cpn10_CS"/>
</dbReference>
<dbReference type="InterPro" id="IPR011032">
    <property type="entry name" value="GroES-like_sf"/>
</dbReference>
<dbReference type="NCBIfam" id="NF001527">
    <property type="entry name" value="PRK00364.1-2"/>
    <property type="match status" value="1"/>
</dbReference>
<dbReference type="NCBIfam" id="NF001531">
    <property type="entry name" value="PRK00364.2-2"/>
    <property type="match status" value="1"/>
</dbReference>
<dbReference type="NCBIfam" id="NF001533">
    <property type="entry name" value="PRK00364.2-4"/>
    <property type="match status" value="1"/>
</dbReference>
<dbReference type="PANTHER" id="PTHR10772">
    <property type="entry name" value="10 KDA HEAT SHOCK PROTEIN"/>
    <property type="match status" value="1"/>
</dbReference>
<dbReference type="PANTHER" id="PTHR10772:SF58">
    <property type="entry name" value="CO-CHAPERONIN GROES"/>
    <property type="match status" value="1"/>
</dbReference>
<dbReference type="Pfam" id="PF00166">
    <property type="entry name" value="Cpn10"/>
    <property type="match status" value="1"/>
</dbReference>
<dbReference type="PRINTS" id="PR00297">
    <property type="entry name" value="CHAPERONIN10"/>
</dbReference>
<dbReference type="SMART" id="SM00883">
    <property type="entry name" value="Cpn10"/>
    <property type="match status" value="1"/>
</dbReference>
<dbReference type="SUPFAM" id="SSF50129">
    <property type="entry name" value="GroES-like"/>
    <property type="match status" value="1"/>
</dbReference>
<dbReference type="PROSITE" id="PS00681">
    <property type="entry name" value="CHAPERONINS_CPN10"/>
    <property type="match status" value="1"/>
</dbReference>
<organism>
    <name type="scientific">Vesicomyosocius okutanii subsp. Calyptogena okutanii (strain HA)</name>
    <dbReference type="NCBI Taxonomy" id="412965"/>
    <lineage>
        <taxon>Bacteria</taxon>
        <taxon>Pseudomonadati</taxon>
        <taxon>Pseudomonadota</taxon>
        <taxon>Gammaproteobacteria</taxon>
        <taxon>Candidatus Pseudothioglobaceae</taxon>
        <taxon>Candidatus Vesicomyosocius</taxon>
    </lineage>
</organism>
<evidence type="ECO:0000255" key="1">
    <source>
        <dbReference type="HAMAP-Rule" id="MF_00580"/>
    </source>
</evidence>